<sequence length="63" mass="7026">MAGGRVAHATLKGPSVVKEIFIGLTLGLVAGGMWKMHHWNEQRKTRSFYDMLEKGQISVVVEE</sequence>
<comment type="function">
    <text evidence="1">This protein is one of the nuclear-coded polypeptide chains of cytochrome c oxidase, the terminal oxidase in mitochondrial electron transport.</text>
</comment>
<comment type="subcellular location">
    <subcellularLocation>
        <location evidence="1">Mitochondrion inner membrane</location>
    </subcellularLocation>
</comment>
<comment type="similarity">
    <text evidence="3">Belongs to the cytochrome c oxidase subunit 5C family.</text>
</comment>
<keyword id="KW-0472">Membrane</keyword>
<keyword id="KW-0496">Mitochondrion</keyword>
<keyword id="KW-0999">Mitochondrion inner membrane</keyword>
<keyword id="KW-0812">Transmembrane</keyword>
<keyword id="KW-1133">Transmembrane helix</keyword>
<name>COX5C_HORVU</name>
<dbReference type="EMBL" id="Z68091">
    <property type="protein sequence ID" value="CAA92107.1"/>
    <property type="molecule type" value="mRNA"/>
</dbReference>
<dbReference type="PIR" id="T05365">
    <property type="entry name" value="T05365"/>
</dbReference>
<dbReference type="SMR" id="Q42841"/>
<dbReference type="OMA" id="GTLWKMH"/>
<dbReference type="ExpressionAtlas" id="Q42841">
    <property type="expression patterns" value="baseline"/>
</dbReference>
<dbReference type="GO" id="GO:0005743">
    <property type="term" value="C:mitochondrial inner membrane"/>
    <property type="evidence" value="ECO:0007669"/>
    <property type="project" value="UniProtKB-SubCell"/>
</dbReference>
<dbReference type="InterPro" id="IPR008432">
    <property type="entry name" value="COX5C"/>
</dbReference>
<dbReference type="PANTHER" id="PTHR34372">
    <property type="entry name" value="CYTOCHROME C OXIDASE SUBUNIT 5C-2-RELATED"/>
    <property type="match status" value="1"/>
</dbReference>
<dbReference type="PANTHER" id="PTHR34372:SF2">
    <property type="entry name" value="CYTOCHROME C OXIDASE SUBUNIT 5C-2-RELATED"/>
    <property type="match status" value="1"/>
</dbReference>
<dbReference type="PIRSF" id="PIRSF038131">
    <property type="entry name" value="COX5C"/>
    <property type="match status" value="1"/>
</dbReference>
<organism>
    <name type="scientific">Hordeum vulgare</name>
    <name type="common">Barley</name>
    <dbReference type="NCBI Taxonomy" id="4513"/>
    <lineage>
        <taxon>Eukaryota</taxon>
        <taxon>Viridiplantae</taxon>
        <taxon>Streptophyta</taxon>
        <taxon>Embryophyta</taxon>
        <taxon>Tracheophyta</taxon>
        <taxon>Spermatophyta</taxon>
        <taxon>Magnoliopsida</taxon>
        <taxon>Liliopsida</taxon>
        <taxon>Poales</taxon>
        <taxon>Poaceae</taxon>
        <taxon>BOP clade</taxon>
        <taxon>Pooideae</taxon>
        <taxon>Triticodae</taxon>
        <taxon>Triticeae</taxon>
        <taxon>Hordeinae</taxon>
        <taxon>Hordeum</taxon>
    </lineage>
</organism>
<proteinExistence type="inferred from homology"/>
<accession>Q42841</accession>
<evidence type="ECO:0000250" key="1"/>
<evidence type="ECO:0000255" key="2"/>
<evidence type="ECO:0000305" key="3"/>
<feature type="initiator methionine" description="Removed" evidence="1">
    <location>
        <position position="1"/>
    </location>
</feature>
<feature type="chain" id="PRO_0000128191" description="Cytochrome c oxidase subunit 5C">
    <location>
        <begin position="2"/>
        <end position="63"/>
    </location>
</feature>
<feature type="transmembrane region" description="Helical" evidence="2">
    <location>
        <begin position="16"/>
        <end position="34"/>
    </location>
</feature>
<reference key="1">
    <citation type="journal article" date="1998" name="Plant Sci.">
        <title>Analysis of randomly selected cDNAs reveals the expression of stress- and defence-related genes in the barley mutant albostrians.</title>
        <authorList>
            <person name="Hess W.R."/>
            <person name="Golz R.R."/>
            <person name="Boerner T."/>
        </authorList>
    </citation>
    <scope>NUCLEOTIDE SEQUENCE [MRNA]</scope>
    <source>
        <strain>cv. Haisa</strain>
        <tissue>Leaf</tissue>
    </source>
</reference>
<protein>
    <recommendedName>
        <fullName>Cytochrome c oxidase subunit 5C</fullName>
    </recommendedName>
    <alternativeName>
        <fullName>Cytochrome c oxidase polypeptide Vc</fullName>
    </alternativeName>
</protein>
<gene>
    <name type="primary">COX5C</name>
    <name type="synonym">COXVC</name>
</gene>